<evidence type="ECO:0000250" key="1"/>
<evidence type="ECO:0000255" key="2"/>
<evidence type="ECO:0000255" key="3">
    <source>
        <dbReference type="PROSITE-ProRule" id="PRU01364"/>
    </source>
</evidence>
<evidence type="ECO:0000305" key="4"/>
<sequence>MARYVVCWMFTINNPTTLPVMRDEIKYMVYQVERGQEGTRHVQGYVEMKRRSSLKQMRGFFPGAHLEKRKGSQEEARSYCMKEDTRIEGPFEFGSFKLSCNDNLFDVIQDMRETHKRPLEYLYDCPNTFDRSKDTLYRVQAEMNKTKAMNSWRTSFSAWTSEVENIMAQPCHRRIIWVYGPNGGEGKTTYAKHLMKTRNAFYSPGGKSLDICRLYNYEDIVIFDIPRCKEDYLNYGLLEEFKNGIIQSGKYEPVLKIVEYVEVIVMANFLPKEGIFSEDRIKLVSC</sequence>
<name>MREP_BBTVA</name>
<protein>
    <recommendedName>
        <fullName>Master replication protein</fullName>
        <shortName>M-Rep</shortName>
        <ecNumber>2.7.7.-</ecNumber>
        <ecNumber>3.1.21.-</ecNumber>
        <ecNumber>3.6.1.-</ecNumber>
    </recommendedName>
</protein>
<organismHost>
    <name type="scientific">Musa</name>
    <dbReference type="NCBI Taxonomy" id="4640"/>
</organismHost>
<reference key="1">
    <citation type="journal article" date="1993" name="J. Gen. Virol.">
        <title>Nucleotide sequence of one component of the banana bunchy top virus genome contains a putative replicase gene.</title>
        <authorList>
            <person name="Harding R.M."/>
            <person name="Burns T.M."/>
            <person name="Hafner G.J."/>
            <person name="Dietzgen R.G."/>
            <person name="Dale J.L."/>
        </authorList>
    </citation>
    <scope>NUCLEOTIDE SEQUENCE [GENOMIC DNA]</scope>
</reference>
<accession>Q86567</accession>
<comment type="function">
    <text evidence="1">Essential for the replication of all genomic viral ssDNA (trans-replication). The closed circular ssDNA genome is first converted to a superhelical dsDNA. Rep binds a specific hairpin at the genome origin of replication. Introduces an endonucleolytic nick within the conserved sequence 5'-A[GT]TATTAC-3' in the intergenic region of the genome, thereby initiating the rolling circle replication (RCR). Following cleavage, binds covalently to the 5'-phosphate of DNA as a tyrosyl ester. The cleavage gives rise to a free 3'-OH that serves as a primer for the cellular DNA polymerase. The polymerase synthesizes the (+) strand DNA by rolling circle mechanism. After one round of replication, a Rep-catalyzed nucleotidyl transfer reaction releases a circular single-stranded virus genome, thereby terminating the replication. Displays origin-specific DNA cleavage, nucleotidyl transferase, ATPase and helicase activities (By similarity).</text>
</comment>
<comment type="catalytic activity">
    <reaction>
        <text>ATP + H2O = ADP + phosphate + H(+)</text>
        <dbReference type="Rhea" id="RHEA:13065"/>
        <dbReference type="ChEBI" id="CHEBI:15377"/>
        <dbReference type="ChEBI" id="CHEBI:15378"/>
        <dbReference type="ChEBI" id="CHEBI:30616"/>
        <dbReference type="ChEBI" id="CHEBI:43474"/>
        <dbReference type="ChEBI" id="CHEBI:456216"/>
    </reaction>
</comment>
<comment type="cofactor">
    <cofactor evidence="1">
        <name>Mg(2+)</name>
        <dbReference type="ChEBI" id="CHEBI:18420"/>
    </cofactor>
    <cofactor evidence="1">
        <name>Mn(2+)</name>
        <dbReference type="ChEBI" id="CHEBI:29035"/>
    </cofactor>
    <text evidence="1">Divalent metal cations, possibly Mg(2+) or Mn(2+).</text>
</comment>
<comment type="subunit">
    <text evidence="1 4">Homooligomer (Potential). Rep binds to repeated DNA motifs (iterons) (By similarity).</text>
</comment>
<comment type="subcellular location">
    <subcellularLocation>
        <location evidence="4">Host nucleus</location>
    </subcellularLocation>
</comment>
<comment type="domain">
    <text evidence="1">There are 3 rolling circle replication (RCR) motifs. RCR-2 is probably involved in metal coordination. RCR-3 is required for phosphodiester bond cleavage for initiation of RCR (By similarity).</text>
</comment>
<comment type="similarity">
    <text evidence="4">Belongs to the nanoviridea/circoviridae replication-associated protein family.</text>
</comment>
<gene>
    <name type="primary">DNA-R</name>
    <name type="synonym">C1</name>
</gene>
<keyword id="KW-0067">ATP-binding</keyword>
<keyword id="KW-0190">Covalent protein-DNA linkage</keyword>
<keyword id="KW-0235">DNA replication</keyword>
<keyword id="KW-0238">DNA-binding</keyword>
<keyword id="KW-0255">Endonuclease</keyword>
<keyword id="KW-0347">Helicase</keyword>
<keyword id="KW-1048">Host nucleus</keyword>
<keyword id="KW-0378">Hydrolase</keyword>
<keyword id="KW-0479">Metal-binding</keyword>
<keyword id="KW-0511">Multifunctional enzyme</keyword>
<keyword id="KW-0540">Nuclease</keyword>
<keyword id="KW-0547">Nucleotide-binding</keyword>
<keyword id="KW-0548">Nucleotidyltransferase</keyword>
<keyword id="KW-1185">Reference proteome</keyword>
<keyword id="KW-0808">Transferase</keyword>
<proteinExistence type="inferred from homology"/>
<dbReference type="EC" id="2.7.7.-"/>
<dbReference type="EC" id="3.1.21.-"/>
<dbReference type="EC" id="3.6.1.-"/>
<dbReference type="EMBL" id="S56276">
    <property type="protein sequence ID" value="AAB25544.1"/>
    <property type="molecule type" value="Genomic_DNA"/>
</dbReference>
<dbReference type="PIR" id="JQ1960">
    <property type="entry name" value="JQ1960"/>
</dbReference>
<dbReference type="SMR" id="Q86567"/>
<dbReference type="KEGG" id="vg:963871"/>
<dbReference type="Proteomes" id="UP000002339">
    <property type="component" value="Genome"/>
</dbReference>
<dbReference type="GO" id="GO:0042025">
    <property type="term" value="C:host cell nucleus"/>
    <property type="evidence" value="ECO:0007669"/>
    <property type="project" value="UniProtKB-SubCell"/>
</dbReference>
<dbReference type="GO" id="GO:0005524">
    <property type="term" value="F:ATP binding"/>
    <property type="evidence" value="ECO:0007669"/>
    <property type="project" value="UniProtKB-KW"/>
</dbReference>
<dbReference type="GO" id="GO:0016887">
    <property type="term" value="F:ATP hydrolysis activity"/>
    <property type="evidence" value="ECO:0007669"/>
    <property type="project" value="RHEA"/>
</dbReference>
<dbReference type="GO" id="GO:0003677">
    <property type="term" value="F:DNA binding"/>
    <property type="evidence" value="ECO:0007669"/>
    <property type="project" value="UniProtKB-KW"/>
</dbReference>
<dbReference type="GO" id="GO:0004519">
    <property type="term" value="F:endonuclease activity"/>
    <property type="evidence" value="ECO:0007669"/>
    <property type="project" value="UniProtKB-KW"/>
</dbReference>
<dbReference type="GO" id="GO:0046872">
    <property type="term" value="F:metal ion binding"/>
    <property type="evidence" value="ECO:0007669"/>
    <property type="project" value="UniProtKB-KW"/>
</dbReference>
<dbReference type="GO" id="GO:0016779">
    <property type="term" value="F:nucleotidyltransferase activity"/>
    <property type="evidence" value="ECO:0007669"/>
    <property type="project" value="UniProtKB-KW"/>
</dbReference>
<dbReference type="GO" id="GO:0003723">
    <property type="term" value="F:RNA binding"/>
    <property type="evidence" value="ECO:0007669"/>
    <property type="project" value="InterPro"/>
</dbReference>
<dbReference type="GO" id="GO:0003724">
    <property type="term" value="F:RNA helicase activity"/>
    <property type="evidence" value="ECO:0007669"/>
    <property type="project" value="InterPro"/>
</dbReference>
<dbReference type="GO" id="GO:0006260">
    <property type="term" value="P:DNA replication"/>
    <property type="evidence" value="ECO:0007669"/>
    <property type="project" value="UniProtKB-KW"/>
</dbReference>
<dbReference type="GO" id="GO:0039684">
    <property type="term" value="P:rolling circle single-stranded viral DNA replication"/>
    <property type="evidence" value="ECO:0000314"/>
    <property type="project" value="UniProtKB"/>
</dbReference>
<dbReference type="CDD" id="cd01983">
    <property type="entry name" value="SIMIBI"/>
    <property type="match status" value="1"/>
</dbReference>
<dbReference type="FunFam" id="3.40.1310.20:FF:000002">
    <property type="entry name" value="Master replication protein"/>
    <property type="match status" value="1"/>
</dbReference>
<dbReference type="Gene3D" id="3.40.1310.20">
    <property type="match status" value="1"/>
</dbReference>
<dbReference type="InterPro" id="IPR049912">
    <property type="entry name" value="CRESS_DNA_REP"/>
</dbReference>
<dbReference type="InterPro" id="IPR000605">
    <property type="entry name" value="Helicase_SF3_ssDNA/RNA_vir"/>
</dbReference>
<dbReference type="Pfam" id="PF00910">
    <property type="entry name" value="RNA_helicase"/>
    <property type="match status" value="1"/>
</dbReference>
<dbReference type="Pfam" id="PF02407">
    <property type="entry name" value="Viral_Rep"/>
    <property type="match status" value="1"/>
</dbReference>
<dbReference type="PROSITE" id="PS52020">
    <property type="entry name" value="CRESS_DNA_REP"/>
    <property type="match status" value="1"/>
</dbReference>
<feature type="chain" id="PRO_0000379898" description="Master replication protein">
    <location>
        <begin position="1"/>
        <end position="286"/>
    </location>
</feature>
<feature type="domain" description="CRESS-DNA virus Rep endonuclease" evidence="3">
    <location>
        <begin position="2"/>
        <end position="96"/>
    </location>
</feature>
<feature type="short sequence motif" description="RCR-1" evidence="3">
    <location>
        <begin position="9"/>
        <end position="12"/>
    </location>
</feature>
<feature type="short sequence motif" description="RCR-2" evidence="3">
    <location>
        <begin position="41"/>
        <end position="43"/>
    </location>
</feature>
<feature type="short sequence motif" description="Nuclear localization signal" evidence="2">
    <location>
        <begin position="50"/>
        <end position="70"/>
    </location>
</feature>
<feature type="short sequence motif" description="RCR-3" evidence="3">
    <location>
        <begin position="79"/>
        <end position="82"/>
    </location>
</feature>
<feature type="short sequence motif" description="Nuclear localization signal" evidence="2">
    <location>
        <begin position="96"/>
        <end position="102"/>
    </location>
</feature>
<feature type="active site" description="For DNA cleavage activity" evidence="3">
    <location>
        <position position="79"/>
    </location>
</feature>
<feature type="binding site" evidence="2">
    <location>
        <position position="33"/>
    </location>
    <ligand>
        <name>a divalent metal cation</name>
        <dbReference type="ChEBI" id="CHEBI:60240"/>
    </ligand>
</feature>
<feature type="binding site" evidence="2">
    <location>
        <position position="41"/>
    </location>
    <ligand>
        <name>a divalent metal cation</name>
        <dbReference type="ChEBI" id="CHEBI:60240"/>
    </ligand>
</feature>
<feature type="binding site" evidence="2">
    <location>
        <position position="84"/>
    </location>
    <ligand>
        <name>a divalent metal cation</name>
        <dbReference type="ChEBI" id="CHEBI:60240"/>
    </ligand>
</feature>
<feature type="binding site" evidence="1">
    <location>
        <begin position="180"/>
        <end position="188"/>
    </location>
    <ligand>
        <name>ATP</name>
        <dbReference type="ChEBI" id="CHEBI:30616"/>
    </ligand>
</feature>
<organism>
    <name type="scientific">Banana bunchy top virus (isolate Autralia)</name>
    <name type="common">BBTV</name>
    <dbReference type="NCBI Taxonomy" id="645099"/>
    <lineage>
        <taxon>Viruses</taxon>
        <taxon>Monodnaviria</taxon>
        <taxon>Shotokuvirae</taxon>
        <taxon>Cressdnaviricota</taxon>
        <taxon>Arfiviricetes</taxon>
        <taxon>Mulpavirales</taxon>
        <taxon>Nanoviridae</taxon>
        <taxon>Babuvirus</taxon>
        <taxon>Babuvirus musae</taxon>
        <taxon>Banana bunchy top virus</taxon>
    </lineage>
</organism>